<gene>
    <name evidence="1" type="primary">tmk</name>
    <name type="ordered locus">SPN23F08570</name>
</gene>
<protein>
    <recommendedName>
        <fullName evidence="1">Thymidylate kinase</fullName>
        <ecNumber evidence="1">2.7.4.9</ecNumber>
    </recommendedName>
    <alternativeName>
        <fullName evidence="1">dTMP kinase</fullName>
    </alternativeName>
</protein>
<proteinExistence type="inferred from homology"/>
<sequence length="212" mass="23352">MSKGFLVSLEGPEGAGKTSVLEALLPILKEKGVEVLTTREPGGVLIGEKIREVILDPSHTQMDAKTELLLYIASRRQHLVEKVLPALEAGKLVIMDRFIDSSVAYQGFGRGLDIEAIDWLNQFATDGLKPDLTLYFDIEVEEGLARIAANSDREVNRLDLEGLDLHKKVRQGYLSLLDKEGNRIVKIDASLPLEQVVETTKAVLFDGMGLAK</sequence>
<name>KTHY_STRPJ</name>
<comment type="function">
    <text evidence="1">Phosphorylation of dTMP to form dTDP in both de novo and salvage pathways of dTTP synthesis.</text>
</comment>
<comment type="catalytic activity">
    <reaction evidence="1">
        <text>dTMP + ATP = dTDP + ADP</text>
        <dbReference type="Rhea" id="RHEA:13517"/>
        <dbReference type="ChEBI" id="CHEBI:30616"/>
        <dbReference type="ChEBI" id="CHEBI:58369"/>
        <dbReference type="ChEBI" id="CHEBI:63528"/>
        <dbReference type="ChEBI" id="CHEBI:456216"/>
        <dbReference type="EC" id="2.7.4.9"/>
    </reaction>
</comment>
<comment type="similarity">
    <text evidence="1">Belongs to the thymidylate kinase family.</text>
</comment>
<dbReference type="EC" id="2.7.4.9" evidence="1"/>
<dbReference type="EMBL" id="FM211187">
    <property type="protein sequence ID" value="CAR68688.1"/>
    <property type="molecule type" value="Genomic_DNA"/>
</dbReference>
<dbReference type="RefSeq" id="WP_000033397.1">
    <property type="nucleotide sequence ID" value="NC_011900.1"/>
</dbReference>
<dbReference type="SMR" id="B8ZP37"/>
<dbReference type="KEGG" id="sne:SPN23F08570"/>
<dbReference type="HOGENOM" id="CLU_049131_0_2_9"/>
<dbReference type="GO" id="GO:0005829">
    <property type="term" value="C:cytosol"/>
    <property type="evidence" value="ECO:0007669"/>
    <property type="project" value="TreeGrafter"/>
</dbReference>
<dbReference type="GO" id="GO:0005524">
    <property type="term" value="F:ATP binding"/>
    <property type="evidence" value="ECO:0007669"/>
    <property type="project" value="UniProtKB-UniRule"/>
</dbReference>
<dbReference type="GO" id="GO:0004798">
    <property type="term" value="F:dTMP kinase activity"/>
    <property type="evidence" value="ECO:0007669"/>
    <property type="project" value="UniProtKB-UniRule"/>
</dbReference>
<dbReference type="GO" id="GO:0006233">
    <property type="term" value="P:dTDP biosynthetic process"/>
    <property type="evidence" value="ECO:0007669"/>
    <property type="project" value="InterPro"/>
</dbReference>
<dbReference type="GO" id="GO:0006235">
    <property type="term" value="P:dTTP biosynthetic process"/>
    <property type="evidence" value="ECO:0007669"/>
    <property type="project" value="UniProtKB-UniRule"/>
</dbReference>
<dbReference type="GO" id="GO:0006227">
    <property type="term" value="P:dUDP biosynthetic process"/>
    <property type="evidence" value="ECO:0007669"/>
    <property type="project" value="TreeGrafter"/>
</dbReference>
<dbReference type="CDD" id="cd01672">
    <property type="entry name" value="TMPK"/>
    <property type="match status" value="1"/>
</dbReference>
<dbReference type="FunFam" id="3.40.50.300:FF:000225">
    <property type="entry name" value="Thymidylate kinase"/>
    <property type="match status" value="1"/>
</dbReference>
<dbReference type="Gene3D" id="3.40.50.300">
    <property type="entry name" value="P-loop containing nucleotide triphosphate hydrolases"/>
    <property type="match status" value="1"/>
</dbReference>
<dbReference type="HAMAP" id="MF_00165">
    <property type="entry name" value="Thymidylate_kinase"/>
    <property type="match status" value="1"/>
</dbReference>
<dbReference type="InterPro" id="IPR027417">
    <property type="entry name" value="P-loop_NTPase"/>
</dbReference>
<dbReference type="InterPro" id="IPR039430">
    <property type="entry name" value="Thymidylate_kin-like_dom"/>
</dbReference>
<dbReference type="InterPro" id="IPR018095">
    <property type="entry name" value="Thymidylate_kin_CS"/>
</dbReference>
<dbReference type="InterPro" id="IPR018094">
    <property type="entry name" value="Thymidylate_kinase"/>
</dbReference>
<dbReference type="NCBIfam" id="TIGR00041">
    <property type="entry name" value="DTMP_kinase"/>
    <property type="match status" value="1"/>
</dbReference>
<dbReference type="PANTHER" id="PTHR10344">
    <property type="entry name" value="THYMIDYLATE KINASE"/>
    <property type="match status" value="1"/>
</dbReference>
<dbReference type="PANTHER" id="PTHR10344:SF4">
    <property type="entry name" value="UMP-CMP KINASE 2, MITOCHONDRIAL"/>
    <property type="match status" value="1"/>
</dbReference>
<dbReference type="Pfam" id="PF02223">
    <property type="entry name" value="Thymidylate_kin"/>
    <property type="match status" value="1"/>
</dbReference>
<dbReference type="SUPFAM" id="SSF52540">
    <property type="entry name" value="P-loop containing nucleoside triphosphate hydrolases"/>
    <property type="match status" value="1"/>
</dbReference>
<dbReference type="PROSITE" id="PS01331">
    <property type="entry name" value="THYMIDYLATE_KINASE"/>
    <property type="match status" value="1"/>
</dbReference>
<keyword id="KW-0067">ATP-binding</keyword>
<keyword id="KW-0418">Kinase</keyword>
<keyword id="KW-0545">Nucleotide biosynthesis</keyword>
<keyword id="KW-0547">Nucleotide-binding</keyword>
<keyword id="KW-0808">Transferase</keyword>
<evidence type="ECO:0000255" key="1">
    <source>
        <dbReference type="HAMAP-Rule" id="MF_00165"/>
    </source>
</evidence>
<accession>B8ZP37</accession>
<reference key="1">
    <citation type="journal article" date="2009" name="J. Bacteriol.">
        <title>Role of conjugative elements in the evolution of the multidrug-resistant pandemic clone Streptococcus pneumoniae Spain23F ST81.</title>
        <authorList>
            <person name="Croucher N.J."/>
            <person name="Walker D."/>
            <person name="Romero P."/>
            <person name="Lennard N."/>
            <person name="Paterson G.K."/>
            <person name="Bason N.C."/>
            <person name="Mitchell A.M."/>
            <person name="Quail M.A."/>
            <person name="Andrew P.W."/>
            <person name="Parkhill J."/>
            <person name="Bentley S.D."/>
            <person name="Mitchell T.J."/>
        </authorList>
    </citation>
    <scope>NUCLEOTIDE SEQUENCE [LARGE SCALE GENOMIC DNA]</scope>
    <source>
        <strain>ATCC 700669 / Spain 23F-1</strain>
    </source>
</reference>
<feature type="chain" id="PRO_1000123591" description="Thymidylate kinase">
    <location>
        <begin position="1"/>
        <end position="212"/>
    </location>
</feature>
<feature type="binding site" evidence="1">
    <location>
        <begin position="11"/>
        <end position="18"/>
    </location>
    <ligand>
        <name>ATP</name>
        <dbReference type="ChEBI" id="CHEBI:30616"/>
    </ligand>
</feature>
<organism>
    <name type="scientific">Streptococcus pneumoniae (strain ATCC 700669 / Spain 23F-1)</name>
    <dbReference type="NCBI Taxonomy" id="561276"/>
    <lineage>
        <taxon>Bacteria</taxon>
        <taxon>Bacillati</taxon>
        <taxon>Bacillota</taxon>
        <taxon>Bacilli</taxon>
        <taxon>Lactobacillales</taxon>
        <taxon>Streptococcaceae</taxon>
        <taxon>Streptococcus</taxon>
    </lineage>
</organism>